<accession>B2K2Z4</accession>
<organism>
    <name type="scientific">Yersinia pseudotuberculosis serotype IB (strain PB1/+)</name>
    <dbReference type="NCBI Taxonomy" id="502801"/>
    <lineage>
        <taxon>Bacteria</taxon>
        <taxon>Pseudomonadati</taxon>
        <taxon>Pseudomonadota</taxon>
        <taxon>Gammaproteobacteria</taxon>
        <taxon>Enterobacterales</taxon>
        <taxon>Yersiniaceae</taxon>
        <taxon>Yersinia</taxon>
    </lineage>
</organism>
<protein>
    <recommendedName>
        <fullName evidence="1">2-dehydro-3-deoxyphosphooctonate aldolase</fullName>
        <ecNumber evidence="1">2.5.1.55</ecNumber>
    </recommendedName>
    <alternativeName>
        <fullName evidence="1">3-deoxy-D-manno-octulosonic acid 8-phosphate synthase</fullName>
    </alternativeName>
    <alternativeName>
        <fullName evidence="1">KDO-8-phosphate synthase</fullName>
        <shortName evidence="1">KDO 8-P synthase</shortName>
        <shortName evidence="1">KDOPS</shortName>
    </alternativeName>
    <alternativeName>
        <fullName evidence="1">Phospho-2-dehydro-3-deoxyoctonate aldolase</fullName>
    </alternativeName>
</protein>
<dbReference type="EC" id="2.5.1.55" evidence="1"/>
<dbReference type="EMBL" id="CP001048">
    <property type="protein sequence ID" value="ACC89033.1"/>
    <property type="molecule type" value="Genomic_DNA"/>
</dbReference>
<dbReference type="RefSeq" id="WP_002211232.1">
    <property type="nucleotide sequence ID" value="NZ_CP009780.1"/>
</dbReference>
<dbReference type="SMR" id="B2K2Z4"/>
<dbReference type="GeneID" id="96665504"/>
<dbReference type="KEGG" id="ypb:YPTS_2067"/>
<dbReference type="PATRIC" id="fig|502801.10.peg.1456"/>
<dbReference type="UniPathway" id="UPA00030"/>
<dbReference type="UniPathway" id="UPA00357">
    <property type="reaction ID" value="UER00474"/>
</dbReference>
<dbReference type="GO" id="GO:0005737">
    <property type="term" value="C:cytoplasm"/>
    <property type="evidence" value="ECO:0007669"/>
    <property type="project" value="UniProtKB-SubCell"/>
</dbReference>
<dbReference type="GO" id="GO:0008676">
    <property type="term" value="F:3-deoxy-8-phosphooctulonate synthase activity"/>
    <property type="evidence" value="ECO:0007669"/>
    <property type="project" value="UniProtKB-UniRule"/>
</dbReference>
<dbReference type="GO" id="GO:0019294">
    <property type="term" value="P:keto-3-deoxy-D-manno-octulosonic acid biosynthetic process"/>
    <property type="evidence" value="ECO:0007669"/>
    <property type="project" value="UniProtKB-UniRule"/>
</dbReference>
<dbReference type="FunFam" id="3.20.20.70:FF:000058">
    <property type="entry name" value="2-dehydro-3-deoxyphosphooctonate aldolase"/>
    <property type="match status" value="1"/>
</dbReference>
<dbReference type="Gene3D" id="3.20.20.70">
    <property type="entry name" value="Aldolase class I"/>
    <property type="match status" value="1"/>
</dbReference>
<dbReference type="HAMAP" id="MF_00056">
    <property type="entry name" value="KDO8P_synth"/>
    <property type="match status" value="1"/>
</dbReference>
<dbReference type="InterPro" id="IPR013785">
    <property type="entry name" value="Aldolase_TIM"/>
</dbReference>
<dbReference type="InterPro" id="IPR006218">
    <property type="entry name" value="DAHP1/KDSA"/>
</dbReference>
<dbReference type="InterPro" id="IPR006269">
    <property type="entry name" value="KDO8P_synthase"/>
</dbReference>
<dbReference type="NCBIfam" id="TIGR01362">
    <property type="entry name" value="KDO8P_synth"/>
    <property type="match status" value="1"/>
</dbReference>
<dbReference type="NCBIfam" id="NF003543">
    <property type="entry name" value="PRK05198.1"/>
    <property type="match status" value="1"/>
</dbReference>
<dbReference type="NCBIfam" id="NF009109">
    <property type="entry name" value="PRK12457.1"/>
    <property type="match status" value="1"/>
</dbReference>
<dbReference type="PANTHER" id="PTHR21057">
    <property type="entry name" value="PHOSPHO-2-DEHYDRO-3-DEOXYHEPTONATE ALDOLASE"/>
    <property type="match status" value="1"/>
</dbReference>
<dbReference type="Pfam" id="PF00793">
    <property type="entry name" value="DAHP_synth_1"/>
    <property type="match status" value="1"/>
</dbReference>
<dbReference type="SUPFAM" id="SSF51569">
    <property type="entry name" value="Aldolase"/>
    <property type="match status" value="1"/>
</dbReference>
<reference key="1">
    <citation type="submission" date="2008-04" db="EMBL/GenBank/DDBJ databases">
        <title>Complete sequence of Yersinia pseudotuberculosis PB1/+.</title>
        <authorList>
            <person name="Copeland A."/>
            <person name="Lucas S."/>
            <person name="Lapidus A."/>
            <person name="Glavina del Rio T."/>
            <person name="Dalin E."/>
            <person name="Tice H."/>
            <person name="Bruce D."/>
            <person name="Goodwin L."/>
            <person name="Pitluck S."/>
            <person name="Munk A.C."/>
            <person name="Brettin T."/>
            <person name="Detter J.C."/>
            <person name="Han C."/>
            <person name="Tapia R."/>
            <person name="Schmutz J."/>
            <person name="Larimer F."/>
            <person name="Land M."/>
            <person name="Hauser L."/>
            <person name="Challacombe J.F."/>
            <person name="Green L."/>
            <person name="Lindler L.E."/>
            <person name="Nikolich M.P."/>
            <person name="Richardson P."/>
        </authorList>
    </citation>
    <scope>NUCLEOTIDE SEQUENCE [LARGE SCALE GENOMIC DNA]</scope>
    <source>
        <strain>PB1/+</strain>
    </source>
</reference>
<feature type="chain" id="PRO_1000091846" description="2-dehydro-3-deoxyphosphooctonate aldolase">
    <location>
        <begin position="1"/>
        <end position="284"/>
    </location>
</feature>
<keyword id="KW-0963">Cytoplasm</keyword>
<keyword id="KW-0448">Lipopolysaccharide biosynthesis</keyword>
<keyword id="KW-0808">Transferase</keyword>
<gene>
    <name evidence="1" type="primary">kdsA</name>
    <name type="ordered locus">YPTS_2067</name>
</gene>
<name>KDSA_YERPB</name>
<sequence>MKQKVVSIGDINVANDLPFVLFGGMNVLESRDLAMRICEHYVTVTQKLGIPYVFKASFDKANRSSIHSYRGPGLEEGMKIFQELKQQFGVKVITDVHEASQAQPVSEVVDVIQLPAFLARQTDLVEAMARTGAVINVKKPQFVSPGQMGNIVEKFKEAGNDQVILCDRGSNFGYDNLVVDMLGINVMVQATGGHPVIFDVTHALQCRDPFGAASGGRRAQVAELARAGMAVGLAGLFIEAHPEPNSAKCDGPSALPLDKLEPFLVQMKAIDDLVKSFPALDTSK</sequence>
<evidence type="ECO:0000255" key="1">
    <source>
        <dbReference type="HAMAP-Rule" id="MF_00056"/>
    </source>
</evidence>
<comment type="catalytic activity">
    <reaction evidence="1">
        <text>D-arabinose 5-phosphate + phosphoenolpyruvate + H2O = 3-deoxy-alpha-D-manno-2-octulosonate-8-phosphate + phosphate</text>
        <dbReference type="Rhea" id="RHEA:14053"/>
        <dbReference type="ChEBI" id="CHEBI:15377"/>
        <dbReference type="ChEBI" id="CHEBI:43474"/>
        <dbReference type="ChEBI" id="CHEBI:57693"/>
        <dbReference type="ChEBI" id="CHEBI:58702"/>
        <dbReference type="ChEBI" id="CHEBI:85985"/>
        <dbReference type="EC" id="2.5.1.55"/>
    </reaction>
</comment>
<comment type="pathway">
    <text evidence="1">Carbohydrate biosynthesis; 3-deoxy-D-manno-octulosonate biosynthesis; 3-deoxy-D-manno-octulosonate from D-ribulose 5-phosphate: step 2/3.</text>
</comment>
<comment type="pathway">
    <text evidence="1">Bacterial outer membrane biogenesis; lipopolysaccharide biosynthesis.</text>
</comment>
<comment type="subcellular location">
    <subcellularLocation>
        <location evidence="1">Cytoplasm</location>
    </subcellularLocation>
</comment>
<comment type="similarity">
    <text evidence="1">Belongs to the KdsA family.</text>
</comment>
<proteinExistence type="inferred from homology"/>